<accession>B5LAT8</accession>
<sequence>MGSLEVEKTAIGWAARDPSGILSPYTYTLRNTGPEDVQVKVLYCGLCHSDLHQVKNDLGMSNYPMVPGHEVVGEVVEVGPEVTKFKVGDTVGVGLIVGCCKNCRPCKQDIEQYCAKKIWNCNDVYTDGKPTQGGFSNFMVVEQKFVVKIPEGMAPEQAAPLLCAGVTVYSPLNHFGFNQSGLRGGILGLGGVGHMGVKIAKAMGHHVTVISSSDKKRQEALDHLGADDYLVSSVNEKMQEAADSLDYIIDTIPVNHPLEPYLSLLKVDGKLILMGVINTPLQFVSPMVMLGRKSITGSFIGSMKETEEVLHFCKEKGVTCQIEMVKMDYINTAMERLEKNDVRYRFVVDVAGSKLDQ</sequence>
<name>CAD1_CAPAN</name>
<dbReference type="EC" id="1.1.1.195" evidence="3"/>
<dbReference type="EC" id="1.1.1.-" evidence="3"/>
<dbReference type="EMBL" id="EU616553">
    <property type="protein sequence ID" value="ACF17645.1"/>
    <property type="molecule type" value="mRNA"/>
</dbReference>
<dbReference type="EMBL" id="AYRZ02000069">
    <property type="protein sequence ID" value="PHT62614.1"/>
    <property type="molecule type" value="Genomic_DNA"/>
</dbReference>
<dbReference type="RefSeq" id="NP_001311509.1">
    <property type="nucleotide sequence ID" value="NM_001324580.1"/>
</dbReference>
<dbReference type="SMR" id="B5LAT8"/>
<dbReference type="STRING" id="4072.B5LAT8"/>
<dbReference type="EnsemblPlants" id="PHT62614">
    <property type="protein sequence ID" value="PHT62614"/>
    <property type="gene ID" value="T459_33509"/>
</dbReference>
<dbReference type="GeneID" id="107840223"/>
<dbReference type="Gramene" id="PHT62614">
    <property type="protein sequence ID" value="PHT62614"/>
    <property type="gene ID" value="T459_33509"/>
</dbReference>
<dbReference type="KEGG" id="cann:107840223"/>
<dbReference type="OMA" id="GHMAIMI"/>
<dbReference type="OrthoDB" id="1879366at2759"/>
<dbReference type="UniPathway" id="UPA00711"/>
<dbReference type="Proteomes" id="UP000222542">
    <property type="component" value="Unassembled WGS sequence"/>
</dbReference>
<dbReference type="GO" id="GO:0005737">
    <property type="term" value="C:cytoplasm"/>
    <property type="evidence" value="ECO:0007669"/>
    <property type="project" value="UniProtKB-SubCell"/>
</dbReference>
<dbReference type="GO" id="GO:0045551">
    <property type="term" value="F:cinnamyl-alcohol dehydrogenase activity"/>
    <property type="evidence" value="ECO:0000318"/>
    <property type="project" value="GO_Central"/>
</dbReference>
<dbReference type="GO" id="GO:0008270">
    <property type="term" value="F:zinc ion binding"/>
    <property type="evidence" value="ECO:0007669"/>
    <property type="project" value="InterPro"/>
</dbReference>
<dbReference type="GO" id="GO:0009820">
    <property type="term" value="P:alkaloid metabolic process"/>
    <property type="evidence" value="ECO:0007669"/>
    <property type="project" value="UniProtKB-ARBA"/>
</dbReference>
<dbReference type="GO" id="GO:0009809">
    <property type="term" value="P:lignin biosynthetic process"/>
    <property type="evidence" value="ECO:0000318"/>
    <property type="project" value="GO_Central"/>
</dbReference>
<dbReference type="CDD" id="cd05283">
    <property type="entry name" value="CAD1"/>
    <property type="match status" value="1"/>
</dbReference>
<dbReference type="FunFam" id="3.40.50.720:FF:000022">
    <property type="entry name" value="Cinnamyl alcohol dehydrogenase"/>
    <property type="match status" value="1"/>
</dbReference>
<dbReference type="FunFam" id="3.90.180.10:FF:000004">
    <property type="entry name" value="probable cinnamyl alcohol dehydrogenase"/>
    <property type="match status" value="1"/>
</dbReference>
<dbReference type="FunFam" id="3.90.180.10:FF:000100">
    <property type="entry name" value="Putative cinnamyl alcohol dehydrogenase 6"/>
    <property type="match status" value="1"/>
</dbReference>
<dbReference type="Gene3D" id="3.90.180.10">
    <property type="entry name" value="Medium-chain alcohol dehydrogenases, catalytic domain"/>
    <property type="match status" value="1"/>
</dbReference>
<dbReference type="Gene3D" id="3.40.50.720">
    <property type="entry name" value="NAD(P)-binding Rossmann-like Domain"/>
    <property type="match status" value="1"/>
</dbReference>
<dbReference type="InterPro" id="IPR013149">
    <property type="entry name" value="ADH-like_C"/>
</dbReference>
<dbReference type="InterPro" id="IPR013154">
    <property type="entry name" value="ADH-like_N"/>
</dbReference>
<dbReference type="InterPro" id="IPR002328">
    <property type="entry name" value="ADH_Zn_CS"/>
</dbReference>
<dbReference type="InterPro" id="IPR047109">
    <property type="entry name" value="CAD-like"/>
</dbReference>
<dbReference type="InterPro" id="IPR011032">
    <property type="entry name" value="GroES-like_sf"/>
</dbReference>
<dbReference type="InterPro" id="IPR036291">
    <property type="entry name" value="NAD(P)-bd_dom_sf"/>
</dbReference>
<dbReference type="InterPro" id="IPR020843">
    <property type="entry name" value="PKS_ER"/>
</dbReference>
<dbReference type="PANTHER" id="PTHR42683">
    <property type="entry name" value="ALDEHYDE REDUCTASE"/>
    <property type="match status" value="1"/>
</dbReference>
<dbReference type="Pfam" id="PF08240">
    <property type="entry name" value="ADH_N"/>
    <property type="match status" value="1"/>
</dbReference>
<dbReference type="Pfam" id="PF00107">
    <property type="entry name" value="ADH_zinc_N"/>
    <property type="match status" value="1"/>
</dbReference>
<dbReference type="SMART" id="SM00829">
    <property type="entry name" value="PKS_ER"/>
    <property type="match status" value="1"/>
</dbReference>
<dbReference type="SUPFAM" id="SSF50129">
    <property type="entry name" value="GroES-like"/>
    <property type="match status" value="1"/>
</dbReference>
<dbReference type="SUPFAM" id="SSF51735">
    <property type="entry name" value="NAD(P)-binding Rossmann-fold domains"/>
    <property type="match status" value="1"/>
</dbReference>
<dbReference type="PROSITE" id="PS00059">
    <property type="entry name" value="ADH_ZINC"/>
    <property type="match status" value="1"/>
</dbReference>
<organism>
    <name type="scientific">Capsicum annuum</name>
    <name type="common">Capsicum pepper</name>
    <dbReference type="NCBI Taxonomy" id="4072"/>
    <lineage>
        <taxon>Eukaryota</taxon>
        <taxon>Viridiplantae</taxon>
        <taxon>Streptophyta</taxon>
        <taxon>Embryophyta</taxon>
        <taxon>Tracheophyta</taxon>
        <taxon>Spermatophyta</taxon>
        <taxon>Magnoliopsida</taxon>
        <taxon>eudicotyledons</taxon>
        <taxon>Gunneridae</taxon>
        <taxon>Pentapetalae</taxon>
        <taxon>asterids</taxon>
        <taxon>lamiids</taxon>
        <taxon>Solanales</taxon>
        <taxon>Solanaceae</taxon>
        <taxon>Solanoideae</taxon>
        <taxon>Capsiceae</taxon>
        <taxon>Capsicum</taxon>
    </lineage>
</organism>
<proteinExistence type="evidence at protein level"/>
<protein>
    <recommendedName>
        <fullName evidence="4 5">Cinnamyl alcohol dehydrogenase 1</fullName>
        <shortName evidence="4 5">CaCAD1</shortName>
        <ecNumber evidence="3">1.1.1.195</ecNumber>
    </recommendedName>
    <alternativeName>
        <fullName evidence="5">Vanillyl alcohol synthase</fullName>
        <ecNumber evidence="3">1.1.1.-</ecNumber>
    </alternativeName>
</protein>
<comment type="function">
    <text evidence="1 3 4 5">Involved in the biosynthesis of capsinoids natural products (e.g. capsiate), non-pungent alkaloids synthesized from phenylpropanoid intermediates in the placental tissue of sweet chili pepper fruit acting as repellant on herbivorous mammals (PubMed:19553373, PubMed:35858994). Catalyzes the reduction of vanillin to generate vanillyl alcohol, a precursor of capsiate, a non-pungent component that accumulates mainly in the placenta of mature red fruits, but also in green fruits to lower levels (PubMed:35858994). Involved in lignin biosynthesis (By similarity). Catalyzes the final step specific for the production of lignin monomers (By similarity). Mediates the conversion of cinnamaldehyde and coniferaldehyde to cinnamyl alcohol and coniferyl alcohol, respectively (PubMed:35858994). Catalyzes the NADPH-dependent reduction of 5-hydroxyconiferaldehyde, sinapaldehyde, 4-coumaraldehyde and caffeyl aldehyde to their respective alcohols (By similarity).</text>
</comment>
<comment type="catalytic activity">
    <reaction evidence="3">
        <text>(E)-cinnamyl alcohol + NADP(+) = (E)-cinnamaldehyde + NADPH + H(+)</text>
        <dbReference type="Rhea" id="RHEA:10392"/>
        <dbReference type="ChEBI" id="CHEBI:15378"/>
        <dbReference type="ChEBI" id="CHEBI:16731"/>
        <dbReference type="ChEBI" id="CHEBI:33227"/>
        <dbReference type="ChEBI" id="CHEBI:57783"/>
        <dbReference type="ChEBI" id="CHEBI:58349"/>
        <dbReference type="EC" id="1.1.1.195"/>
    </reaction>
    <physiologicalReaction direction="right-to-left" evidence="3">
        <dbReference type="Rhea" id="RHEA:10394"/>
    </physiologicalReaction>
</comment>
<comment type="catalytic activity">
    <reaction evidence="3">
        <text>(E)-coniferol + NADP(+) = (E)-coniferaldehyde + NADPH + H(+)</text>
        <dbReference type="Rhea" id="RHEA:22444"/>
        <dbReference type="ChEBI" id="CHEBI:15378"/>
        <dbReference type="ChEBI" id="CHEBI:16547"/>
        <dbReference type="ChEBI" id="CHEBI:17745"/>
        <dbReference type="ChEBI" id="CHEBI:57783"/>
        <dbReference type="ChEBI" id="CHEBI:58349"/>
        <dbReference type="EC" id="1.1.1.195"/>
    </reaction>
    <physiologicalReaction direction="right-to-left" evidence="3">
        <dbReference type="Rhea" id="RHEA:22446"/>
    </physiologicalReaction>
</comment>
<comment type="catalytic activity">
    <reaction evidence="1">
        <text>(E)-sinapyl alcohol + NADP(+) = (E)-sinapaldehyde + NADPH + H(+)</text>
        <dbReference type="Rhea" id="RHEA:45704"/>
        <dbReference type="ChEBI" id="CHEBI:15378"/>
        <dbReference type="ChEBI" id="CHEBI:27949"/>
        <dbReference type="ChEBI" id="CHEBI:57783"/>
        <dbReference type="ChEBI" id="CHEBI:58349"/>
        <dbReference type="ChEBI" id="CHEBI:64557"/>
        <dbReference type="EC" id="1.1.1.195"/>
    </reaction>
    <physiologicalReaction direction="right-to-left" evidence="1">
        <dbReference type="Rhea" id="RHEA:45706"/>
    </physiologicalReaction>
</comment>
<comment type="catalytic activity">
    <reaction evidence="1">
        <text>(E)-4-coumaroyl alcohol + NADP(+) = (E)-4-coumaraldehyde + NADPH + H(+)</text>
        <dbReference type="Rhea" id="RHEA:45724"/>
        <dbReference type="ChEBI" id="CHEBI:15378"/>
        <dbReference type="ChEBI" id="CHEBI:28353"/>
        <dbReference type="ChEBI" id="CHEBI:57783"/>
        <dbReference type="ChEBI" id="CHEBI:58349"/>
        <dbReference type="ChEBI" id="CHEBI:64555"/>
        <dbReference type="EC" id="1.1.1.195"/>
    </reaction>
    <physiologicalReaction direction="right-to-left" evidence="1">
        <dbReference type="Rhea" id="RHEA:45726"/>
    </physiologicalReaction>
</comment>
<comment type="catalytic activity">
    <reaction evidence="1">
        <text>(E)-caffeyl alcohol + NADP(+) = (E)-caffeyl aldehyde + NADPH + H(+)</text>
        <dbReference type="Rhea" id="RHEA:45728"/>
        <dbReference type="ChEBI" id="CHEBI:15378"/>
        <dbReference type="ChEBI" id="CHEBI:28323"/>
        <dbReference type="ChEBI" id="CHEBI:31334"/>
        <dbReference type="ChEBI" id="CHEBI:57783"/>
        <dbReference type="ChEBI" id="CHEBI:58349"/>
    </reaction>
    <physiologicalReaction direction="right-to-left" evidence="1">
        <dbReference type="Rhea" id="RHEA:45730"/>
    </physiologicalReaction>
</comment>
<comment type="catalytic activity">
    <reaction evidence="3">
        <text>vanillin + NADPH + H(+) = 4-hydroxy-3-methoxy-benzenemethanol + NADP(+)</text>
        <dbReference type="Rhea" id="RHEA:76611"/>
        <dbReference type="ChEBI" id="CHEBI:15378"/>
        <dbReference type="ChEBI" id="CHEBI:18346"/>
        <dbReference type="ChEBI" id="CHEBI:18353"/>
        <dbReference type="ChEBI" id="CHEBI:57783"/>
        <dbReference type="ChEBI" id="CHEBI:58349"/>
    </reaction>
    <physiologicalReaction direction="left-to-right" evidence="3">
        <dbReference type="Rhea" id="RHEA:76612"/>
    </physiologicalReaction>
</comment>
<comment type="cofactor">
    <cofactor evidence="1">
        <name>Zn(2+)</name>
        <dbReference type="ChEBI" id="CHEBI:29105"/>
    </cofactor>
    <text evidence="1">Binds 2 Zn(2+) ions per subunit.</text>
</comment>
<comment type="activity regulation">
    <text evidence="3">Inhibited, in a concentration-dependent manner, by N-(O-hydroxyphenyl) sulfinamoyltertiobutyl acetate (OHPAS), a specific cinnamyl alcohol dehydrogenase (CAD) inhibitor, as well as by ethylenediaminetetraacetic acid (EDTA), a metalloenzyme inhibitor.</text>
</comment>
<comment type="pathway">
    <text evidence="3">Aromatic compound metabolism; phenylpropanoid biosynthesis.</text>
</comment>
<comment type="subunit">
    <text evidence="1">Homodimer.</text>
</comment>
<comment type="subcellular location">
    <subcellularLocation>
        <location evidence="4">Cytoplasm</location>
    </subcellularLocation>
</comment>
<comment type="tissue specificity">
    <text evidence="3">Accumulates mainly in the placenta of red fruits, and, to a lower extent, in green fruits placenta, pericarp and seeds.</text>
</comment>
<comment type="similarity">
    <text evidence="6">Belongs to the zinc-containing alcohol dehydrogenase family.</text>
</comment>
<comment type="online information" name="Protein Spotlight">
    <link uri="https://www.proteinspotlight.org/back_issues/263/"/>
    <text>Hot - Issue 263 of November 2023</text>
</comment>
<reference key="1">
    <citation type="journal article" date="2009" name="Plant Physiol.">
        <title>A dynamic interface for capsaicinoid systems biology.</title>
        <authorList>
            <person name="Mazourek M."/>
            <person name="Pujar A."/>
            <person name="Borovsky Y."/>
            <person name="Paran I."/>
            <person name="Mueller L."/>
            <person name="Jahn M.M."/>
        </authorList>
    </citation>
    <scope>NUCLEOTIDE SEQUENCE [MRNA]</scope>
    <scope>FUNCTION</scope>
    <scope>REVIEW ON CAPSAICINOIDS BIOSYNTHESIS</scope>
    <source>
        <strain>cv. Sante Fe Grande</strain>
    </source>
</reference>
<reference key="2">
    <citation type="journal article" date="2014" name="Nat. Genet.">
        <title>Genome sequence of the hot pepper provides insights into the evolution of pungency in Capsicum species.</title>
        <authorList>
            <person name="Kim S."/>
            <person name="Park M."/>
            <person name="Yeom S.I."/>
            <person name="Kim Y.M."/>
            <person name="Lee J.M."/>
            <person name="Lee H.A."/>
            <person name="Seo E."/>
            <person name="Choi J."/>
            <person name="Cheong K."/>
            <person name="Kim K.T."/>
            <person name="Jung K."/>
            <person name="Lee G.W."/>
            <person name="Oh S.K."/>
            <person name="Bae C."/>
            <person name="Kim S.B."/>
            <person name="Lee H.Y."/>
            <person name="Kim S.Y."/>
            <person name="Kim M.S."/>
            <person name="Kang B.C."/>
            <person name="Jo Y.D."/>
            <person name="Yang H.B."/>
            <person name="Jeong H.J."/>
            <person name="Kang W.H."/>
            <person name="Kwon J.K."/>
            <person name="Shin C."/>
            <person name="Lim J.Y."/>
            <person name="Park J.H."/>
            <person name="Huh J.H."/>
            <person name="Kim J.S."/>
            <person name="Kim B.D."/>
            <person name="Cohen O."/>
            <person name="Paran I."/>
            <person name="Suh M.C."/>
            <person name="Lee S.B."/>
            <person name="Kim Y.K."/>
            <person name="Shin Y."/>
            <person name="Noh S.J."/>
            <person name="Park J."/>
            <person name="Seo Y.S."/>
            <person name="Kwon S.Y."/>
            <person name="Kim H.A."/>
            <person name="Park J.M."/>
            <person name="Kim H.J."/>
            <person name="Choi S.B."/>
            <person name="Bosland P.W."/>
            <person name="Reeves G."/>
            <person name="Jo S.H."/>
            <person name="Lee B.W."/>
            <person name="Cho H.T."/>
            <person name="Choi H.S."/>
            <person name="Lee M.S."/>
            <person name="Yu Y."/>
            <person name="Do Choi Y."/>
            <person name="Park B.S."/>
            <person name="van Deynze A."/>
            <person name="Ashrafi H."/>
            <person name="Hill T."/>
            <person name="Kim W.T."/>
            <person name="Pai H.S."/>
            <person name="Ahn H.K."/>
            <person name="Yeam I."/>
            <person name="Giovannoni J.J."/>
            <person name="Rose J.K."/>
            <person name="Soerensen I."/>
            <person name="Lee S.J."/>
            <person name="Kim R.W."/>
            <person name="Choi I.Y."/>
            <person name="Choi B.S."/>
            <person name="Lim J.S."/>
            <person name="Lee Y.H."/>
            <person name="Choi D."/>
        </authorList>
    </citation>
    <scope>NUCLEOTIDE SEQUENCE [LARGE SCALE GENOMIC DNA]</scope>
    <source>
        <strain>cv. CM334</strain>
    </source>
</reference>
<reference key="3">
    <citation type="journal article" date="2017" name="Genome Biol.">
        <title>New reference genome sequences of hot pepper reveal the massive evolution of plant disease-resistance genes by retroduplication.</title>
        <authorList>
            <person name="Kim S."/>
            <person name="Park J."/>
            <person name="Yeom S.I."/>
            <person name="Kim Y.M."/>
            <person name="Seo E."/>
            <person name="Kim K.T."/>
            <person name="Kim M.S."/>
            <person name="Lee J.M."/>
            <person name="Cheong K."/>
            <person name="Shin H.S."/>
            <person name="Kim S.B."/>
            <person name="Han K."/>
            <person name="Lee J."/>
            <person name="Park M."/>
            <person name="Lee H.A."/>
            <person name="Lee H.Y."/>
            <person name="Lee Y."/>
            <person name="Oh S."/>
            <person name="Lee J.H."/>
            <person name="Choi E."/>
            <person name="Choi E."/>
            <person name="Lee S.E."/>
            <person name="Jeon J."/>
            <person name="Kim H."/>
            <person name="Choi G."/>
            <person name="Song H."/>
            <person name="Lee J."/>
            <person name="Lee S.C."/>
            <person name="Kwon J.K."/>
            <person name="Lee H.Y."/>
            <person name="Koo N."/>
            <person name="Hong Y."/>
            <person name="Kim R.W."/>
            <person name="Kang W.H."/>
            <person name="Huh J.H."/>
            <person name="Kang B.C."/>
            <person name="Yang T.J."/>
            <person name="Lee Y.H."/>
            <person name="Bennetzen J.L."/>
            <person name="Choi D."/>
        </authorList>
    </citation>
    <scope>NUCLEOTIDE SEQUENCE [LARGE SCALE GENOMIC DNA]</scope>
    <source>
        <strain>cv. CM334</strain>
    </source>
</reference>
<reference key="4">
    <citation type="journal article" date="2022" name="Sci. Rep.">
        <title>Vanillin reduction in the biosynthetic pathway of capsiate, a non-pungent component of Capsicum fruits, is catalyzed by cinnamyl alcohol dehydrogenase.</title>
        <authorList>
            <person name="Sano K."/>
            <person name="Uzawa Y."/>
            <person name="Kaneshima I."/>
            <person name="Nakasato S."/>
            <person name="Hashimoto M."/>
            <person name="Tanaka Y."/>
            <person name="Nakatani S."/>
            <person name="Kobata K."/>
        </authorList>
    </citation>
    <scope>FUNCTION</scope>
    <scope>CATALYTIC ACTIVITY</scope>
    <scope>PATHWAY</scope>
    <scope>ACTIVITY REGULATION</scope>
    <scope>TISSUE SPECIFICITY</scope>
    <source>
        <strain>cv. Aji Dulce strain 2</strain>
        <strain>cv. CH-19 Sweet</strain>
        <strain>cv. Himo</strain>
        <strain>cv. Moruga Yellow</strain>
        <strain>cv. Red Habanero</strain>
        <strain>cv. Yume-matsuri</strain>
    </source>
</reference>
<feature type="chain" id="PRO_0000458906" description="Cinnamyl alcohol dehydrogenase 1">
    <location>
        <begin position="1"/>
        <end position="357"/>
    </location>
</feature>
<feature type="domain" description="Enoyl reductase (ER)" evidence="2">
    <location>
        <begin position="20"/>
        <end position="348"/>
    </location>
</feature>
<feature type="binding site" evidence="1">
    <location>
        <position position="47"/>
    </location>
    <ligand>
        <name>Zn(2+)</name>
        <dbReference type="ChEBI" id="CHEBI:29105"/>
        <label>1</label>
        <note>catalytic</note>
    </ligand>
</feature>
<feature type="binding site" evidence="1">
    <location>
        <position position="49"/>
    </location>
    <ligand>
        <name>NADP(+)</name>
        <dbReference type="ChEBI" id="CHEBI:58349"/>
    </ligand>
</feature>
<feature type="binding site" evidence="1">
    <location>
        <position position="69"/>
    </location>
    <ligand>
        <name>Zn(2+)</name>
        <dbReference type="ChEBI" id="CHEBI:29105"/>
        <label>1</label>
        <note>catalytic</note>
    </ligand>
</feature>
<feature type="binding site" evidence="1">
    <location>
        <position position="70"/>
    </location>
    <ligand>
        <name>Zn(2+)</name>
        <dbReference type="ChEBI" id="CHEBI:29105"/>
        <label>1</label>
        <note>catalytic</note>
    </ligand>
</feature>
<feature type="binding site" evidence="1">
    <location>
        <position position="100"/>
    </location>
    <ligand>
        <name>Zn(2+)</name>
        <dbReference type="ChEBI" id="CHEBI:29105"/>
        <label>2</label>
    </ligand>
</feature>
<feature type="binding site" evidence="1">
    <location>
        <position position="103"/>
    </location>
    <ligand>
        <name>Zn(2+)</name>
        <dbReference type="ChEBI" id="CHEBI:29105"/>
        <label>2</label>
    </ligand>
</feature>
<feature type="binding site" evidence="1">
    <location>
        <position position="106"/>
    </location>
    <ligand>
        <name>Zn(2+)</name>
        <dbReference type="ChEBI" id="CHEBI:29105"/>
        <label>2</label>
    </ligand>
</feature>
<feature type="binding site" evidence="1">
    <location>
        <position position="114"/>
    </location>
    <ligand>
        <name>Zn(2+)</name>
        <dbReference type="ChEBI" id="CHEBI:29105"/>
        <label>2</label>
    </ligand>
</feature>
<feature type="binding site" evidence="1">
    <location>
        <position position="163"/>
    </location>
    <ligand>
        <name>Zn(2+)</name>
        <dbReference type="ChEBI" id="CHEBI:29105"/>
        <label>1</label>
        <note>catalytic</note>
    </ligand>
</feature>
<feature type="binding site" evidence="1">
    <location>
        <position position="167"/>
    </location>
    <ligand>
        <name>NADP(+)</name>
        <dbReference type="ChEBI" id="CHEBI:58349"/>
    </ligand>
</feature>
<feature type="binding site" evidence="1">
    <location>
        <begin position="188"/>
        <end position="193"/>
    </location>
    <ligand>
        <name>NADP(+)</name>
        <dbReference type="ChEBI" id="CHEBI:58349"/>
    </ligand>
</feature>
<feature type="binding site" evidence="1">
    <location>
        <begin position="211"/>
        <end position="216"/>
    </location>
    <ligand>
        <name>NADP(+)</name>
        <dbReference type="ChEBI" id="CHEBI:58349"/>
    </ligand>
</feature>
<feature type="binding site" evidence="1">
    <location>
        <position position="251"/>
    </location>
    <ligand>
        <name>NADP(+)</name>
        <dbReference type="ChEBI" id="CHEBI:58349"/>
    </ligand>
</feature>
<feature type="binding site" evidence="1">
    <location>
        <position position="275"/>
    </location>
    <ligand>
        <name>NADP(+)</name>
        <dbReference type="ChEBI" id="CHEBI:58349"/>
    </ligand>
</feature>
<feature type="binding site" evidence="1">
    <location>
        <begin position="298"/>
        <end position="300"/>
    </location>
    <ligand>
        <name>NADP(+)</name>
        <dbReference type="ChEBI" id="CHEBI:58349"/>
    </ligand>
</feature>
<keyword id="KW-0963">Cytoplasm</keyword>
<keyword id="KW-0438">Lignin biosynthesis</keyword>
<keyword id="KW-0479">Metal-binding</keyword>
<keyword id="KW-0521">NADP</keyword>
<keyword id="KW-0560">Oxidoreductase</keyword>
<keyword id="KW-1185">Reference proteome</keyword>
<keyword id="KW-0862">Zinc</keyword>
<evidence type="ECO:0000250" key="1">
    <source>
        <dbReference type="UniProtKB" id="O49482"/>
    </source>
</evidence>
<evidence type="ECO:0000255" key="2"/>
<evidence type="ECO:0000269" key="3">
    <source>
    </source>
</evidence>
<evidence type="ECO:0000303" key="4">
    <source>
    </source>
</evidence>
<evidence type="ECO:0000303" key="5">
    <source>
    </source>
</evidence>
<evidence type="ECO:0000305" key="6"/>
<evidence type="ECO:0000312" key="7">
    <source>
        <dbReference type="EMBL" id="PHT62614.1"/>
    </source>
</evidence>
<gene>
    <name evidence="4 5" type="primary">CAD1</name>
    <name evidence="7" type="ORF">T459_33509</name>
</gene>